<comment type="function">
    <text evidence="2">Component of the ubiquinol-cytochrome c reductase complex (complex III or cytochrome b-c1 complex) that is part of the mitochondrial respiratory chain. The b-c1 complex mediates electron transfer from ubiquinol to cytochrome c. Contributes to the generation of a proton gradient across the mitochondrial membrane that is then used for ATP synthesis.</text>
</comment>
<comment type="cofactor">
    <cofactor evidence="2">
        <name>heme b</name>
        <dbReference type="ChEBI" id="CHEBI:60344"/>
    </cofactor>
    <text evidence="2">Binds 2 heme b groups non-covalently.</text>
</comment>
<comment type="subunit">
    <text evidence="2">The cytochrome bc1 complex contains 11 subunits: 3 respiratory subunits (MT-CYB, CYC1 and UQCRFS1), 2 core proteins (UQCRC1 and UQCRC2) and 6 low-molecular weight proteins (UQCRH/QCR6, UQCRB/QCR7, UQCRQ/QCR8, UQCR10/QCR9, UQCR11/QCR10 and a cleavage product of UQCRFS1). This cytochrome bc1 complex then forms a dimer.</text>
</comment>
<comment type="subcellular location">
    <subcellularLocation>
        <location evidence="2">Mitochondrion inner membrane</location>
        <topology evidence="2">Multi-pass membrane protein</topology>
    </subcellularLocation>
</comment>
<comment type="miscellaneous">
    <text evidence="1">Heme 1 (or BL or b562) is low-potential and absorbs at about 562 nm, and heme 2 (or BH or b566) is high-potential and absorbs at about 566 nm.</text>
</comment>
<comment type="similarity">
    <text evidence="3 4">Belongs to the cytochrome b family.</text>
</comment>
<comment type="caution">
    <text evidence="2">The full-length protein contains only eight transmembrane helices, not nine as predicted by bioinformatics tools.</text>
</comment>
<accession>O47924</accession>
<geneLocation type="mitochondrion"/>
<reference key="1">
    <citation type="journal article" date="1998" name="Proc. R. Soc. B">
        <title>New phylogenetic perspectives on the Cervidae (Artiodactyla) are provided by the mitochondrial cytochrome b gene.</title>
        <authorList>
            <person name="Randi E."/>
            <person name="Mucci N."/>
            <person name="Pierpaoli M."/>
            <person name="Douzery E.J.P."/>
        </authorList>
    </citation>
    <scope>NUCLEOTIDE SEQUENCE [GENOMIC DNA]</scope>
    <source>
        <strain>Isolate #4549</strain>
    </source>
</reference>
<evidence type="ECO:0000250" key="1"/>
<evidence type="ECO:0000250" key="2">
    <source>
        <dbReference type="UniProtKB" id="P00157"/>
    </source>
</evidence>
<evidence type="ECO:0000255" key="3">
    <source>
        <dbReference type="PROSITE-ProRule" id="PRU00967"/>
    </source>
</evidence>
<evidence type="ECO:0000255" key="4">
    <source>
        <dbReference type="PROSITE-ProRule" id="PRU00968"/>
    </source>
</evidence>
<organism>
    <name type="scientific">Cervus elaphus</name>
    <name type="common">Red deer</name>
    <dbReference type="NCBI Taxonomy" id="9860"/>
    <lineage>
        <taxon>Eukaryota</taxon>
        <taxon>Metazoa</taxon>
        <taxon>Chordata</taxon>
        <taxon>Craniata</taxon>
        <taxon>Vertebrata</taxon>
        <taxon>Euteleostomi</taxon>
        <taxon>Mammalia</taxon>
        <taxon>Eutheria</taxon>
        <taxon>Laurasiatheria</taxon>
        <taxon>Artiodactyla</taxon>
        <taxon>Ruminantia</taxon>
        <taxon>Pecora</taxon>
        <taxon>Cervidae</taxon>
        <taxon>Cervinae</taxon>
        <taxon>Cervus</taxon>
    </lineage>
</organism>
<protein>
    <recommendedName>
        <fullName>Cytochrome b</fullName>
    </recommendedName>
    <alternativeName>
        <fullName>Complex III subunit 3</fullName>
    </alternativeName>
    <alternativeName>
        <fullName>Complex III subunit III</fullName>
    </alternativeName>
    <alternativeName>
        <fullName>Cytochrome b-c1 complex subunit 3</fullName>
    </alternativeName>
    <alternativeName>
        <fullName>Ubiquinol-cytochrome-c reductase complex cytochrome b subunit</fullName>
    </alternativeName>
</protein>
<feature type="chain" id="PRO_0000060759" description="Cytochrome b">
    <location>
        <begin position="1"/>
        <end position="379"/>
    </location>
</feature>
<feature type="transmembrane region" description="Helical" evidence="2">
    <location>
        <begin position="33"/>
        <end position="53"/>
    </location>
</feature>
<feature type="transmembrane region" description="Helical" evidence="2">
    <location>
        <begin position="77"/>
        <end position="98"/>
    </location>
</feature>
<feature type="transmembrane region" description="Helical" evidence="2">
    <location>
        <begin position="113"/>
        <end position="133"/>
    </location>
</feature>
<feature type="transmembrane region" description="Helical" evidence="2">
    <location>
        <begin position="178"/>
        <end position="198"/>
    </location>
</feature>
<feature type="transmembrane region" description="Helical" evidence="2">
    <location>
        <begin position="226"/>
        <end position="246"/>
    </location>
</feature>
<feature type="transmembrane region" description="Helical" evidence="2">
    <location>
        <begin position="288"/>
        <end position="308"/>
    </location>
</feature>
<feature type="transmembrane region" description="Helical" evidence="2">
    <location>
        <begin position="320"/>
        <end position="340"/>
    </location>
</feature>
<feature type="transmembrane region" description="Helical" evidence="2">
    <location>
        <begin position="347"/>
        <end position="367"/>
    </location>
</feature>
<feature type="binding site" description="axial binding residue" evidence="2">
    <location>
        <position position="83"/>
    </location>
    <ligand>
        <name>heme b</name>
        <dbReference type="ChEBI" id="CHEBI:60344"/>
        <label>b562</label>
    </ligand>
    <ligandPart>
        <name>Fe</name>
        <dbReference type="ChEBI" id="CHEBI:18248"/>
    </ligandPart>
</feature>
<feature type="binding site" description="axial binding residue" evidence="2">
    <location>
        <position position="97"/>
    </location>
    <ligand>
        <name>heme b</name>
        <dbReference type="ChEBI" id="CHEBI:60344"/>
        <label>b566</label>
    </ligand>
    <ligandPart>
        <name>Fe</name>
        <dbReference type="ChEBI" id="CHEBI:18248"/>
    </ligandPart>
</feature>
<feature type="binding site" description="axial binding residue" evidence="2">
    <location>
        <position position="182"/>
    </location>
    <ligand>
        <name>heme b</name>
        <dbReference type="ChEBI" id="CHEBI:60344"/>
        <label>b562</label>
    </ligand>
    <ligandPart>
        <name>Fe</name>
        <dbReference type="ChEBI" id="CHEBI:18248"/>
    </ligandPart>
</feature>
<feature type="binding site" description="axial binding residue" evidence="2">
    <location>
        <position position="196"/>
    </location>
    <ligand>
        <name>heme b</name>
        <dbReference type="ChEBI" id="CHEBI:60344"/>
        <label>b566</label>
    </ligand>
    <ligandPart>
        <name>Fe</name>
        <dbReference type="ChEBI" id="CHEBI:18248"/>
    </ligandPart>
</feature>
<feature type="binding site" evidence="2">
    <location>
        <position position="201"/>
    </location>
    <ligand>
        <name>a ubiquinone</name>
        <dbReference type="ChEBI" id="CHEBI:16389"/>
    </ligand>
</feature>
<proteinExistence type="inferred from homology"/>
<dbReference type="EMBL" id="AJ000021">
    <property type="protein sequence ID" value="CAA03860.1"/>
    <property type="molecule type" value="Genomic_DNA"/>
</dbReference>
<dbReference type="SMR" id="O47924"/>
<dbReference type="GO" id="GO:0005743">
    <property type="term" value="C:mitochondrial inner membrane"/>
    <property type="evidence" value="ECO:0007669"/>
    <property type="project" value="UniProtKB-SubCell"/>
</dbReference>
<dbReference type="GO" id="GO:0045275">
    <property type="term" value="C:respiratory chain complex III"/>
    <property type="evidence" value="ECO:0007669"/>
    <property type="project" value="InterPro"/>
</dbReference>
<dbReference type="GO" id="GO:0046872">
    <property type="term" value="F:metal ion binding"/>
    <property type="evidence" value="ECO:0007669"/>
    <property type="project" value="UniProtKB-KW"/>
</dbReference>
<dbReference type="GO" id="GO:0008121">
    <property type="term" value="F:ubiquinol-cytochrome-c reductase activity"/>
    <property type="evidence" value="ECO:0007669"/>
    <property type="project" value="InterPro"/>
</dbReference>
<dbReference type="GO" id="GO:0006122">
    <property type="term" value="P:mitochondrial electron transport, ubiquinol to cytochrome c"/>
    <property type="evidence" value="ECO:0007669"/>
    <property type="project" value="TreeGrafter"/>
</dbReference>
<dbReference type="CDD" id="cd00290">
    <property type="entry name" value="cytochrome_b_C"/>
    <property type="match status" value="1"/>
</dbReference>
<dbReference type="CDD" id="cd00284">
    <property type="entry name" value="Cytochrome_b_N"/>
    <property type="match status" value="1"/>
</dbReference>
<dbReference type="FunFam" id="1.20.810.10:FF:000002">
    <property type="entry name" value="Cytochrome b"/>
    <property type="match status" value="1"/>
</dbReference>
<dbReference type="Gene3D" id="1.20.810.10">
    <property type="entry name" value="Cytochrome Bc1 Complex, Chain C"/>
    <property type="match status" value="1"/>
</dbReference>
<dbReference type="InterPro" id="IPR005798">
    <property type="entry name" value="Cyt_b/b6_C"/>
</dbReference>
<dbReference type="InterPro" id="IPR036150">
    <property type="entry name" value="Cyt_b/b6_C_sf"/>
</dbReference>
<dbReference type="InterPro" id="IPR005797">
    <property type="entry name" value="Cyt_b/b6_N"/>
</dbReference>
<dbReference type="InterPro" id="IPR027387">
    <property type="entry name" value="Cytb/b6-like_sf"/>
</dbReference>
<dbReference type="InterPro" id="IPR030689">
    <property type="entry name" value="Cytochrome_b"/>
</dbReference>
<dbReference type="InterPro" id="IPR048260">
    <property type="entry name" value="Cytochrome_b_C_euk/bac"/>
</dbReference>
<dbReference type="InterPro" id="IPR048259">
    <property type="entry name" value="Cytochrome_b_N_euk/bac"/>
</dbReference>
<dbReference type="InterPro" id="IPR016174">
    <property type="entry name" value="Di-haem_cyt_TM"/>
</dbReference>
<dbReference type="PANTHER" id="PTHR19271">
    <property type="entry name" value="CYTOCHROME B"/>
    <property type="match status" value="1"/>
</dbReference>
<dbReference type="PANTHER" id="PTHR19271:SF16">
    <property type="entry name" value="CYTOCHROME B"/>
    <property type="match status" value="1"/>
</dbReference>
<dbReference type="Pfam" id="PF00032">
    <property type="entry name" value="Cytochrom_B_C"/>
    <property type="match status" value="1"/>
</dbReference>
<dbReference type="Pfam" id="PF00033">
    <property type="entry name" value="Cytochrome_B"/>
    <property type="match status" value="1"/>
</dbReference>
<dbReference type="PIRSF" id="PIRSF038885">
    <property type="entry name" value="COB"/>
    <property type="match status" value="1"/>
</dbReference>
<dbReference type="SUPFAM" id="SSF81648">
    <property type="entry name" value="a domain/subunit of cytochrome bc1 complex (Ubiquinol-cytochrome c reductase)"/>
    <property type="match status" value="1"/>
</dbReference>
<dbReference type="SUPFAM" id="SSF81342">
    <property type="entry name" value="Transmembrane di-heme cytochromes"/>
    <property type="match status" value="1"/>
</dbReference>
<dbReference type="PROSITE" id="PS51003">
    <property type="entry name" value="CYTB_CTER"/>
    <property type="match status" value="1"/>
</dbReference>
<dbReference type="PROSITE" id="PS51002">
    <property type="entry name" value="CYTB_NTER"/>
    <property type="match status" value="1"/>
</dbReference>
<gene>
    <name type="primary">MT-CYB</name>
    <name type="synonym">COB</name>
    <name type="synonym">CYTB</name>
    <name type="synonym">MTCYB</name>
</gene>
<name>CYB_CEREL</name>
<sequence>MTNIRKTHPLMKIVNNAFIDLPAPSNISSWWNFGSLLGVCLILQILTGLFLAMHYTSDTMTAFSSVTHICRDVNYGWIIRYMHANGASMFFICLFMHVGRGLYYGSYTFLETWNIGVVLLFTVMATAFVGYVLPWGQMSFWGATVITNLLSAIPYIGTNLVEWIWGGFSVDKATLTRFFAFHFILPFIIAALAMVHLLFLHETGSNNPTGIPSDADKIPFHPYYTIKDILGILLLVLFLMLLVLFAPDLLGDPDNYTPANPLNTPPHIKPEWYFLFAYAILRSIPNKLGGVLALVSSILILILMPLLHTSKQRSMMFRPFSQCLFWILVADLLTLTWIGGQPVEYPFIIIGQLASVLYFFIILVLMPITSTIENNLLKW</sequence>
<keyword id="KW-0249">Electron transport</keyword>
<keyword id="KW-0349">Heme</keyword>
<keyword id="KW-0408">Iron</keyword>
<keyword id="KW-0472">Membrane</keyword>
<keyword id="KW-0479">Metal-binding</keyword>
<keyword id="KW-0496">Mitochondrion</keyword>
<keyword id="KW-0999">Mitochondrion inner membrane</keyword>
<keyword id="KW-0679">Respiratory chain</keyword>
<keyword id="KW-0812">Transmembrane</keyword>
<keyword id="KW-1133">Transmembrane helix</keyword>
<keyword id="KW-0813">Transport</keyword>
<keyword id="KW-0830">Ubiquinone</keyword>